<evidence type="ECO:0000255" key="1">
    <source>
        <dbReference type="HAMAP-Rule" id="MF_00508"/>
    </source>
</evidence>
<evidence type="ECO:0000305" key="2"/>
<accession>A8GVB3</accession>
<comment type="function">
    <text evidence="1">Involved in the binding of tRNA to the ribosomes.</text>
</comment>
<comment type="subunit">
    <text evidence="1">Part of the 30S ribosomal subunit.</text>
</comment>
<comment type="similarity">
    <text evidence="1">Belongs to the universal ribosomal protein uS10 family.</text>
</comment>
<keyword id="KW-0687">Ribonucleoprotein</keyword>
<keyword id="KW-0689">Ribosomal protein</keyword>
<name>RS10_RICB8</name>
<proteinExistence type="inferred from homology"/>
<organism>
    <name type="scientific">Rickettsia bellii (strain OSU 85-389)</name>
    <dbReference type="NCBI Taxonomy" id="391896"/>
    <lineage>
        <taxon>Bacteria</taxon>
        <taxon>Pseudomonadati</taxon>
        <taxon>Pseudomonadota</taxon>
        <taxon>Alphaproteobacteria</taxon>
        <taxon>Rickettsiales</taxon>
        <taxon>Rickettsiaceae</taxon>
        <taxon>Rickettsieae</taxon>
        <taxon>Rickettsia</taxon>
        <taxon>belli group</taxon>
    </lineage>
</organism>
<dbReference type="EMBL" id="CP000849">
    <property type="protein sequence ID" value="ABV78790.1"/>
    <property type="molecule type" value="Genomic_DNA"/>
</dbReference>
<dbReference type="RefSeq" id="WP_011477722.1">
    <property type="nucleotide sequence ID" value="NC_009883.1"/>
</dbReference>
<dbReference type="SMR" id="A8GVB3"/>
<dbReference type="KEGG" id="rbo:A1I_02030"/>
<dbReference type="HOGENOM" id="CLU_122625_1_3_5"/>
<dbReference type="GO" id="GO:1990904">
    <property type="term" value="C:ribonucleoprotein complex"/>
    <property type="evidence" value="ECO:0007669"/>
    <property type="project" value="UniProtKB-KW"/>
</dbReference>
<dbReference type="GO" id="GO:0005840">
    <property type="term" value="C:ribosome"/>
    <property type="evidence" value="ECO:0007669"/>
    <property type="project" value="UniProtKB-KW"/>
</dbReference>
<dbReference type="GO" id="GO:0003735">
    <property type="term" value="F:structural constituent of ribosome"/>
    <property type="evidence" value="ECO:0007669"/>
    <property type="project" value="InterPro"/>
</dbReference>
<dbReference type="GO" id="GO:0000049">
    <property type="term" value="F:tRNA binding"/>
    <property type="evidence" value="ECO:0007669"/>
    <property type="project" value="UniProtKB-UniRule"/>
</dbReference>
<dbReference type="GO" id="GO:0006412">
    <property type="term" value="P:translation"/>
    <property type="evidence" value="ECO:0007669"/>
    <property type="project" value="UniProtKB-UniRule"/>
</dbReference>
<dbReference type="FunFam" id="3.30.70.600:FF:000003">
    <property type="entry name" value="30S ribosomal protein S10"/>
    <property type="match status" value="1"/>
</dbReference>
<dbReference type="Gene3D" id="3.30.70.600">
    <property type="entry name" value="Ribosomal protein S10 domain"/>
    <property type="match status" value="1"/>
</dbReference>
<dbReference type="HAMAP" id="MF_00508">
    <property type="entry name" value="Ribosomal_uS10"/>
    <property type="match status" value="1"/>
</dbReference>
<dbReference type="InterPro" id="IPR001848">
    <property type="entry name" value="Ribosomal_uS10"/>
</dbReference>
<dbReference type="InterPro" id="IPR027486">
    <property type="entry name" value="Ribosomal_uS10_dom"/>
</dbReference>
<dbReference type="InterPro" id="IPR036838">
    <property type="entry name" value="Ribosomal_uS10_dom_sf"/>
</dbReference>
<dbReference type="NCBIfam" id="NF001861">
    <property type="entry name" value="PRK00596.1"/>
    <property type="match status" value="1"/>
</dbReference>
<dbReference type="NCBIfam" id="TIGR01049">
    <property type="entry name" value="rpsJ_bact"/>
    <property type="match status" value="1"/>
</dbReference>
<dbReference type="PANTHER" id="PTHR11700">
    <property type="entry name" value="30S RIBOSOMAL PROTEIN S10 FAMILY MEMBER"/>
    <property type="match status" value="1"/>
</dbReference>
<dbReference type="Pfam" id="PF00338">
    <property type="entry name" value="Ribosomal_S10"/>
    <property type="match status" value="1"/>
</dbReference>
<dbReference type="PRINTS" id="PR00971">
    <property type="entry name" value="RIBOSOMALS10"/>
</dbReference>
<dbReference type="SMART" id="SM01403">
    <property type="entry name" value="Ribosomal_S10"/>
    <property type="match status" value="1"/>
</dbReference>
<dbReference type="SUPFAM" id="SSF54999">
    <property type="entry name" value="Ribosomal protein S10"/>
    <property type="match status" value="1"/>
</dbReference>
<sequence>MKNKIKIRLKSFDHRSLDQATKEIVSAVKRTFANISGPIPLPRKIQRFTVNRSPHVHIKSREQYEIRTQKRLLVIDDPNPVVVDALSKVDLAAGVDVVIELESGE</sequence>
<protein>
    <recommendedName>
        <fullName evidence="1">Small ribosomal subunit protein uS10</fullName>
    </recommendedName>
    <alternativeName>
        <fullName evidence="2">30S ribosomal protein S10</fullName>
    </alternativeName>
</protein>
<reference key="1">
    <citation type="submission" date="2007-09" db="EMBL/GenBank/DDBJ databases">
        <title>Complete genome sequencing of Rickettsia bellii.</title>
        <authorList>
            <person name="Madan A."/>
            <person name="Lee H."/>
            <person name="Madan A."/>
            <person name="Yoon J.-G."/>
            <person name="Ryu G.-Y."/>
            <person name="Dasch G."/>
            <person name="Ereemeva M."/>
        </authorList>
    </citation>
    <scope>NUCLEOTIDE SEQUENCE [LARGE SCALE GENOMIC DNA]</scope>
    <source>
        <strain>OSU 85-389</strain>
    </source>
</reference>
<gene>
    <name evidence="1" type="primary">rpsJ</name>
    <name type="ordered locus">A1I_02030</name>
</gene>
<feature type="chain" id="PRO_1000015100" description="Small ribosomal subunit protein uS10">
    <location>
        <begin position="1"/>
        <end position="105"/>
    </location>
</feature>